<dbReference type="EC" id="2.7.7.6" evidence="1"/>
<dbReference type="EMBL" id="CP000539">
    <property type="protein sequence ID" value="ABM44004.1"/>
    <property type="molecule type" value="Genomic_DNA"/>
</dbReference>
<dbReference type="SMR" id="A1WCM9"/>
<dbReference type="STRING" id="232721.Ajs_3897"/>
<dbReference type="KEGG" id="ajs:Ajs_3897"/>
<dbReference type="eggNOG" id="COG0085">
    <property type="taxonomic scope" value="Bacteria"/>
</dbReference>
<dbReference type="HOGENOM" id="CLU_000524_4_3_4"/>
<dbReference type="Proteomes" id="UP000000645">
    <property type="component" value="Chromosome"/>
</dbReference>
<dbReference type="GO" id="GO:0000428">
    <property type="term" value="C:DNA-directed RNA polymerase complex"/>
    <property type="evidence" value="ECO:0007669"/>
    <property type="project" value="UniProtKB-KW"/>
</dbReference>
<dbReference type="GO" id="GO:0003677">
    <property type="term" value="F:DNA binding"/>
    <property type="evidence" value="ECO:0007669"/>
    <property type="project" value="UniProtKB-UniRule"/>
</dbReference>
<dbReference type="GO" id="GO:0003899">
    <property type="term" value="F:DNA-directed RNA polymerase activity"/>
    <property type="evidence" value="ECO:0007669"/>
    <property type="project" value="UniProtKB-UniRule"/>
</dbReference>
<dbReference type="GO" id="GO:0032549">
    <property type="term" value="F:ribonucleoside binding"/>
    <property type="evidence" value="ECO:0007669"/>
    <property type="project" value="InterPro"/>
</dbReference>
<dbReference type="GO" id="GO:0006351">
    <property type="term" value="P:DNA-templated transcription"/>
    <property type="evidence" value="ECO:0007669"/>
    <property type="project" value="UniProtKB-UniRule"/>
</dbReference>
<dbReference type="CDD" id="cd00653">
    <property type="entry name" value="RNA_pol_B_RPB2"/>
    <property type="match status" value="1"/>
</dbReference>
<dbReference type="FunFam" id="2.40.50.100:FF:000006">
    <property type="entry name" value="DNA-directed RNA polymerase subunit beta"/>
    <property type="match status" value="1"/>
</dbReference>
<dbReference type="FunFam" id="3.90.1800.10:FF:000001">
    <property type="entry name" value="DNA-directed RNA polymerase subunit beta"/>
    <property type="match status" value="1"/>
</dbReference>
<dbReference type="Gene3D" id="2.40.50.100">
    <property type="match status" value="1"/>
</dbReference>
<dbReference type="Gene3D" id="2.40.50.150">
    <property type="match status" value="1"/>
</dbReference>
<dbReference type="Gene3D" id="3.90.1100.10">
    <property type="match status" value="2"/>
</dbReference>
<dbReference type="Gene3D" id="2.30.150.10">
    <property type="entry name" value="DNA-directed RNA polymerase, beta subunit, external 1 domain"/>
    <property type="match status" value="1"/>
</dbReference>
<dbReference type="Gene3D" id="2.40.270.10">
    <property type="entry name" value="DNA-directed RNA polymerase, subunit 2, domain 6"/>
    <property type="match status" value="1"/>
</dbReference>
<dbReference type="Gene3D" id="3.90.1800.10">
    <property type="entry name" value="RNA polymerase alpha subunit dimerisation domain"/>
    <property type="match status" value="1"/>
</dbReference>
<dbReference type="Gene3D" id="3.90.1110.10">
    <property type="entry name" value="RNA polymerase Rpb2, domain 2"/>
    <property type="match status" value="1"/>
</dbReference>
<dbReference type="HAMAP" id="MF_01321">
    <property type="entry name" value="RNApol_bact_RpoB"/>
    <property type="match status" value="1"/>
</dbReference>
<dbReference type="InterPro" id="IPR042107">
    <property type="entry name" value="DNA-dir_RNA_pol_bsu_ext_1_sf"/>
</dbReference>
<dbReference type="InterPro" id="IPR019462">
    <property type="entry name" value="DNA-dir_RNA_pol_bsu_external_1"/>
</dbReference>
<dbReference type="InterPro" id="IPR015712">
    <property type="entry name" value="DNA-dir_RNA_pol_su2"/>
</dbReference>
<dbReference type="InterPro" id="IPR007120">
    <property type="entry name" value="DNA-dir_RNAP_su2_dom"/>
</dbReference>
<dbReference type="InterPro" id="IPR037033">
    <property type="entry name" value="DNA-dir_RNAP_su2_hyb_sf"/>
</dbReference>
<dbReference type="InterPro" id="IPR010243">
    <property type="entry name" value="RNA_pol_bsu_bac"/>
</dbReference>
<dbReference type="InterPro" id="IPR007121">
    <property type="entry name" value="RNA_pol_bsu_CS"/>
</dbReference>
<dbReference type="InterPro" id="IPR007644">
    <property type="entry name" value="RNA_pol_bsu_protrusion"/>
</dbReference>
<dbReference type="InterPro" id="IPR007642">
    <property type="entry name" value="RNA_pol_Rpb2_2"/>
</dbReference>
<dbReference type="InterPro" id="IPR037034">
    <property type="entry name" value="RNA_pol_Rpb2_2_sf"/>
</dbReference>
<dbReference type="InterPro" id="IPR007645">
    <property type="entry name" value="RNA_pol_Rpb2_3"/>
</dbReference>
<dbReference type="InterPro" id="IPR007641">
    <property type="entry name" value="RNA_pol_Rpb2_7"/>
</dbReference>
<dbReference type="InterPro" id="IPR014724">
    <property type="entry name" value="RNA_pol_RPB2_OB-fold"/>
</dbReference>
<dbReference type="NCBIfam" id="NF001616">
    <property type="entry name" value="PRK00405.1"/>
    <property type="match status" value="1"/>
</dbReference>
<dbReference type="NCBIfam" id="TIGR02013">
    <property type="entry name" value="rpoB"/>
    <property type="match status" value="1"/>
</dbReference>
<dbReference type="PANTHER" id="PTHR20856">
    <property type="entry name" value="DNA-DIRECTED RNA POLYMERASE I SUBUNIT 2"/>
    <property type="match status" value="1"/>
</dbReference>
<dbReference type="Pfam" id="PF04563">
    <property type="entry name" value="RNA_pol_Rpb2_1"/>
    <property type="match status" value="1"/>
</dbReference>
<dbReference type="Pfam" id="PF04561">
    <property type="entry name" value="RNA_pol_Rpb2_2"/>
    <property type="match status" value="2"/>
</dbReference>
<dbReference type="Pfam" id="PF04565">
    <property type="entry name" value="RNA_pol_Rpb2_3"/>
    <property type="match status" value="1"/>
</dbReference>
<dbReference type="Pfam" id="PF10385">
    <property type="entry name" value="RNA_pol_Rpb2_45"/>
    <property type="match status" value="1"/>
</dbReference>
<dbReference type="Pfam" id="PF00562">
    <property type="entry name" value="RNA_pol_Rpb2_6"/>
    <property type="match status" value="1"/>
</dbReference>
<dbReference type="Pfam" id="PF04560">
    <property type="entry name" value="RNA_pol_Rpb2_7"/>
    <property type="match status" value="1"/>
</dbReference>
<dbReference type="SUPFAM" id="SSF64484">
    <property type="entry name" value="beta and beta-prime subunits of DNA dependent RNA-polymerase"/>
    <property type="match status" value="1"/>
</dbReference>
<dbReference type="PROSITE" id="PS01166">
    <property type="entry name" value="RNA_POL_BETA"/>
    <property type="match status" value="1"/>
</dbReference>
<feature type="chain" id="PRO_0000300270" description="DNA-directed RNA polymerase subunit beta">
    <location>
        <begin position="1"/>
        <end position="1374"/>
    </location>
</feature>
<accession>A1WCM9</accession>
<reference key="1">
    <citation type="submission" date="2006-12" db="EMBL/GenBank/DDBJ databases">
        <title>Complete sequence of chromosome 1 of Acidovorax sp. JS42.</title>
        <authorList>
            <person name="Copeland A."/>
            <person name="Lucas S."/>
            <person name="Lapidus A."/>
            <person name="Barry K."/>
            <person name="Detter J.C."/>
            <person name="Glavina del Rio T."/>
            <person name="Dalin E."/>
            <person name="Tice H."/>
            <person name="Pitluck S."/>
            <person name="Chertkov O."/>
            <person name="Brettin T."/>
            <person name="Bruce D."/>
            <person name="Han C."/>
            <person name="Tapia R."/>
            <person name="Gilna P."/>
            <person name="Schmutz J."/>
            <person name="Larimer F."/>
            <person name="Land M."/>
            <person name="Hauser L."/>
            <person name="Kyrpides N."/>
            <person name="Kim E."/>
            <person name="Stahl D."/>
            <person name="Richardson P."/>
        </authorList>
    </citation>
    <scope>NUCLEOTIDE SEQUENCE [LARGE SCALE GENOMIC DNA]</scope>
    <source>
        <strain>JS42</strain>
    </source>
</reference>
<gene>
    <name evidence="1" type="primary">rpoB</name>
    <name type="ordered locus">Ajs_3897</name>
</gene>
<sequence length="1374" mass="153288">MAQTSTYSYTERKRIRKSFGSRDSVLKVPYLLQMQRDAYTAFLQADTAPQKRSNEGLQAAFNSAFPIVSHNGFVEMKFVEYNLAKPAFDVRECQTRGLTFASAVRAKVQLIIYDRESSTSQSKVVKEVKEQEVYMGEVPLMTDKGSFIINGTERVIVSQLHRSPGVFFEHDKGKTHSSGKLLFSARIIPYRGSWLDFEFDPKDILYFRVDRRRKMPVTILLKAIGLNPESILANFFVNDNFRLMDSGAQLEFVPERLRGEVARFDITDKAGKVIVAKDKRVTARHTRELEQSGTTHISVPEDFLIGRVVARNIVDGDTGEILAKANEELTEALLKKLRAAGVQDLQVIYTNELDQGAYISQTLRIDETVDEFAARVAIYRMMRPGEPPTEDAVQALFQRLFYNPDTYDLSRVGRMKFNAKIGRDEATGPMVLSNDDILAVVKILVDLRNGKGEVDDIDHLGNRRVRCVGELAENQYRTGLARIEKAVKERLGQAEQEPLMPHDLINSKPISAALKEFFGASQLSQFMDQTNPLAEITHKRRVSALGPGGLTRERAGFEVRDVHVTHYGRVCPIETPEGPNIGLINSLALYARLNEYGFIETPYRRVVDGKVTMEIDYLSAIEEGKYIIAQANATLDAEGRLTGDLVSAREKGESTLVSADRVQYMDVSPAQIVSVAASLVPFLEHDDANRALMGANMSRQAVPVLRPEKPMVGTGIERVAAVDSGTVVTANRGGVVDYVDATRIVVRVNDDEAVAGEVGVDIYNLIKYQRSNQNTNIHQRPIVKKGDKLAKGDVIADGASTDLGEIAIGQNMLIAFMPWNGYNFEDSILISERVVAEDRYTSIHIEELVVMARDTKLGAEEITRDIPNLSEQQLNRLDESGIIYVGAEVQPGDTLVGKVTPKGETTLTPEEKLLRAIFGEKASDVKDTSLRVDQGSQGTVIDVQVFTREGIQRDKRAQQIIDDELKRFRLDLNDQLRIVEADAFDRIEKLLTGRVANGGPQKLAKGTKIDKAYLASVEKFHWFDIRPAEEEVATQLESIKNALEQTRHSFDLAFEEKRKKLTQGDELPAGVLKMVKVYLAVKRRLQPGDKMAGRHGNKGVVSKIVPVEDMPYMADGTPADIVLNPLGVPSRMNIGQVLEVHLGWAGKGMGQRIGDMLQREAKTAELRKFLEEIYNSRGRKEDLSQLSDDEILAMARELTSGVPFASPVFDGASEEEIKDMLKLAYPDDLAQAKGLTETRTQAYLYDGRTGERFERPTTVGYMHYLKLHHLVDDKMHARSTGPYSLVTQQPLGGKAQFGGQRFGEMEVWALEAYGAAYVLQEMLTVKSDDVQGRTKVYENIVKGEHAIEAGMPESFNVLVKEIRSLGLDIELERS</sequence>
<keyword id="KW-0240">DNA-directed RNA polymerase</keyword>
<keyword id="KW-0548">Nucleotidyltransferase</keyword>
<keyword id="KW-0804">Transcription</keyword>
<keyword id="KW-0808">Transferase</keyword>
<comment type="function">
    <text evidence="1">DNA-dependent RNA polymerase catalyzes the transcription of DNA into RNA using the four ribonucleoside triphosphates as substrates.</text>
</comment>
<comment type="catalytic activity">
    <reaction evidence="1">
        <text>RNA(n) + a ribonucleoside 5'-triphosphate = RNA(n+1) + diphosphate</text>
        <dbReference type="Rhea" id="RHEA:21248"/>
        <dbReference type="Rhea" id="RHEA-COMP:14527"/>
        <dbReference type="Rhea" id="RHEA-COMP:17342"/>
        <dbReference type="ChEBI" id="CHEBI:33019"/>
        <dbReference type="ChEBI" id="CHEBI:61557"/>
        <dbReference type="ChEBI" id="CHEBI:140395"/>
        <dbReference type="EC" id="2.7.7.6"/>
    </reaction>
</comment>
<comment type="subunit">
    <text evidence="1">The RNAP catalytic core consists of 2 alpha, 1 beta, 1 beta' and 1 omega subunit. When a sigma factor is associated with the core the holoenzyme is formed, which can initiate transcription.</text>
</comment>
<comment type="similarity">
    <text evidence="1">Belongs to the RNA polymerase beta chain family.</text>
</comment>
<organism>
    <name type="scientific">Acidovorax sp. (strain JS42)</name>
    <dbReference type="NCBI Taxonomy" id="232721"/>
    <lineage>
        <taxon>Bacteria</taxon>
        <taxon>Pseudomonadati</taxon>
        <taxon>Pseudomonadota</taxon>
        <taxon>Betaproteobacteria</taxon>
        <taxon>Burkholderiales</taxon>
        <taxon>Comamonadaceae</taxon>
        <taxon>Acidovorax</taxon>
    </lineage>
</organism>
<evidence type="ECO:0000255" key="1">
    <source>
        <dbReference type="HAMAP-Rule" id="MF_01321"/>
    </source>
</evidence>
<protein>
    <recommendedName>
        <fullName evidence="1">DNA-directed RNA polymerase subunit beta</fullName>
        <shortName evidence="1">RNAP subunit beta</shortName>
        <ecNumber evidence="1">2.7.7.6</ecNumber>
    </recommendedName>
    <alternativeName>
        <fullName evidence="1">RNA polymerase subunit beta</fullName>
    </alternativeName>
    <alternativeName>
        <fullName evidence="1">Transcriptase subunit beta</fullName>
    </alternativeName>
</protein>
<name>RPOB_ACISJ</name>
<proteinExistence type="inferred from homology"/>